<sequence>MSGKIKIGINGFGRIGRLVMRATMLRPDIEVVAINDPFIDAEYMAYMFKYDSVHKTWPGHVNGSKDGFLVEGRKIHTFTESDPSKINWGAAGADIVIESTGVFTDIAKATAHLTGGAKKVIITAPSNDAPMYVMGVNHEKYNPATDHIISNASCTTNCLAPLAKVVNSKFGIKEGLMTTVHATTATQKTVDGPSKKDWRGGRAVNGNIIPSSTGAAKAVGKVLPELKGKLTGMAFRVPTNDVSVVDLTVTLEKATTYEDIMKALKEASEGEMKGVLAYTDEDVVSSDFVTDPASCTVDAKAGIMLSPTFVKLVAWYDNEWGYSNRVVDLALHVAKKAAVKV</sequence>
<reference key="1">
    <citation type="journal article" date="1994" name="Nature">
        <title>Five identical intron positions in ancient duplicated genes of eubacterial origin.</title>
        <authorList>
            <person name="Kersanach R."/>
            <person name="Brinkmann H."/>
            <person name="Liaud M.-F."/>
            <person name="Zhang D.-X."/>
            <person name="Martin W."/>
            <person name="Cerff R."/>
        </authorList>
    </citation>
    <scope>NUCLEOTIDE SEQUENCE [GENOMIC DNA]</scope>
    <source>
        <strain>1132</strain>
    </source>
</reference>
<organism>
    <name type="scientific">Chlamydomonas reinhardtii</name>
    <name type="common">Chlamydomonas smithii</name>
    <dbReference type="NCBI Taxonomy" id="3055"/>
    <lineage>
        <taxon>Eukaryota</taxon>
        <taxon>Viridiplantae</taxon>
        <taxon>Chlorophyta</taxon>
        <taxon>core chlorophytes</taxon>
        <taxon>Chlorophyceae</taxon>
        <taxon>CS clade</taxon>
        <taxon>Chlamydomonadales</taxon>
        <taxon>Chlamydomonadaceae</taxon>
        <taxon>Chlamydomonas</taxon>
    </lineage>
</organism>
<accession>P49644</accession>
<evidence type="ECO:0000250" key="1"/>
<evidence type="ECO:0000255" key="2">
    <source>
        <dbReference type="PROSITE-ProRule" id="PRU10009"/>
    </source>
</evidence>
<evidence type="ECO:0000305" key="3"/>
<dbReference type="EC" id="1.2.1.12"/>
<dbReference type="EMBL" id="L27669">
    <property type="protein sequence ID" value="AAA86856.1"/>
    <property type="molecule type" value="Genomic_DNA"/>
</dbReference>
<dbReference type="PIR" id="T08147">
    <property type="entry name" value="T08147"/>
</dbReference>
<dbReference type="SMR" id="P49644"/>
<dbReference type="PaxDb" id="3055-EDO96575"/>
<dbReference type="eggNOG" id="KOG0657">
    <property type="taxonomic scope" value="Eukaryota"/>
</dbReference>
<dbReference type="UniPathway" id="UPA00109">
    <property type="reaction ID" value="UER00184"/>
</dbReference>
<dbReference type="GO" id="GO:0005737">
    <property type="term" value="C:cytoplasm"/>
    <property type="evidence" value="ECO:0007669"/>
    <property type="project" value="UniProtKB-SubCell"/>
</dbReference>
<dbReference type="GO" id="GO:0004365">
    <property type="term" value="F:glyceraldehyde-3-phosphate dehydrogenase (NAD+) (phosphorylating) activity"/>
    <property type="evidence" value="ECO:0007669"/>
    <property type="project" value="UniProtKB-EC"/>
</dbReference>
<dbReference type="GO" id="GO:0051287">
    <property type="term" value="F:NAD binding"/>
    <property type="evidence" value="ECO:0007669"/>
    <property type="project" value="InterPro"/>
</dbReference>
<dbReference type="GO" id="GO:0050661">
    <property type="term" value="F:NADP binding"/>
    <property type="evidence" value="ECO:0007669"/>
    <property type="project" value="InterPro"/>
</dbReference>
<dbReference type="GO" id="GO:0006006">
    <property type="term" value="P:glucose metabolic process"/>
    <property type="evidence" value="ECO:0007669"/>
    <property type="project" value="InterPro"/>
</dbReference>
<dbReference type="GO" id="GO:0006096">
    <property type="term" value="P:glycolytic process"/>
    <property type="evidence" value="ECO:0007669"/>
    <property type="project" value="UniProtKB-UniPathway"/>
</dbReference>
<dbReference type="CDD" id="cd18126">
    <property type="entry name" value="GAPDH_I_C"/>
    <property type="match status" value="1"/>
</dbReference>
<dbReference type="CDD" id="cd05214">
    <property type="entry name" value="GAPDH_I_N"/>
    <property type="match status" value="1"/>
</dbReference>
<dbReference type="FunFam" id="3.30.360.10:FF:000001">
    <property type="entry name" value="Glyceraldehyde-3-phosphate dehydrogenase"/>
    <property type="match status" value="1"/>
</dbReference>
<dbReference type="FunFam" id="3.40.50.720:FF:000266">
    <property type="entry name" value="Glyceraldehyde-3-phosphate dehydrogenase"/>
    <property type="match status" value="1"/>
</dbReference>
<dbReference type="Gene3D" id="3.30.360.10">
    <property type="entry name" value="Dihydrodipicolinate Reductase, domain 2"/>
    <property type="match status" value="1"/>
</dbReference>
<dbReference type="Gene3D" id="3.40.50.720">
    <property type="entry name" value="NAD(P)-binding Rossmann-like Domain"/>
    <property type="match status" value="1"/>
</dbReference>
<dbReference type="InterPro" id="IPR020831">
    <property type="entry name" value="GlycerAld/Erythrose_P_DH"/>
</dbReference>
<dbReference type="InterPro" id="IPR020830">
    <property type="entry name" value="GlycerAld_3-P_DH_AS"/>
</dbReference>
<dbReference type="InterPro" id="IPR020829">
    <property type="entry name" value="GlycerAld_3-P_DH_cat"/>
</dbReference>
<dbReference type="InterPro" id="IPR020828">
    <property type="entry name" value="GlycerAld_3-P_DH_NAD(P)-bd"/>
</dbReference>
<dbReference type="InterPro" id="IPR006424">
    <property type="entry name" value="Glyceraldehyde-3-P_DH_1"/>
</dbReference>
<dbReference type="InterPro" id="IPR036291">
    <property type="entry name" value="NAD(P)-bd_dom_sf"/>
</dbReference>
<dbReference type="NCBIfam" id="TIGR01534">
    <property type="entry name" value="GAPDH-I"/>
    <property type="match status" value="1"/>
</dbReference>
<dbReference type="PANTHER" id="PTHR10836">
    <property type="entry name" value="GLYCERALDEHYDE 3-PHOSPHATE DEHYDROGENASE"/>
    <property type="match status" value="1"/>
</dbReference>
<dbReference type="PANTHER" id="PTHR10836:SF76">
    <property type="entry name" value="GLYCERALDEHYDE-3-PHOSPHATE DEHYDROGENASE-RELATED"/>
    <property type="match status" value="1"/>
</dbReference>
<dbReference type="Pfam" id="PF02800">
    <property type="entry name" value="Gp_dh_C"/>
    <property type="match status" value="1"/>
</dbReference>
<dbReference type="Pfam" id="PF00044">
    <property type="entry name" value="Gp_dh_N"/>
    <property type="match status" value="1"/>
</dbReference>
<dbReference type="PIRSF" id="PIRSF000149">
    <property type="entry name" value="GAP_DH"/>
    <property type="match status" value="1"/>
</dbReference>
<dbReference type="PRINTS" id="PR00078">
    <property type="entry name" value="G3PDHDRGNASE"/>
</dbReference>
<dbReference type="SMART" id="SM00846">
    <property type="entry name" value="Gp_dh_N"/>
    <property type="match status" value="1"/>
</dbReference>
<dbReference type="SUPFAM" id="SSF55347">
    <property type="entry name" value="Glyceraldehyde-3-phosphate dehydrogenase-like, C-terminal domain"/>
    <property type="match status" value="1"/>
</dbReference>
<dbReference type="SUPFAM" id="SSF51735">
    <property type="entry name" value="NAD(P)-binding Rossmann-fold domains"/>
    <property type="match status" value="1"/>
</dbReference>
<dbReference type="PROSITE" id="PS00071">
    <property type="entry name" value="GAPDH"/>
    <property type="match status" value="1"/>
</dbReference>
<gene>
    <name type="primary">GAPC</name>
</gene>
<feature type="chain" id="PRO_0000145596" description="Glyceraldehyde-3-phosphate dehydrogenase, cytosolic">
    <location>
        <begin position="1"/>
        <end position="341"/>
    </location>
</feature>
<feature type="active site" description="Nucleophile" evidence="2">
    <location>
        <position position="154"/>
    </location>
</feature>
<feature type="binding site" evidence="1">
    <location>
        <begin position="14"/>
        <end position="15"/>
    </location>
    <ligand>
        <name>NAD(+)</name>
        <dbReference type="ChEBI" id="CHEBI:57540"/>
    </ligand>
</feature>
<feature type="binding site" evidence="1">
    <location>
        <position position="36"/>
    </location>
    <ligand>
        <name>NAD(+)</name>
        <dbReference type="ChEBI" id="CHEBI:57540"/>
    </ligand>
</feature>
<feature type="binding site" evidence="1">
    <location>
        <begin position="153"/>
        <end position="155"/>
    </location>
    <ligand>
        <name>D-glyceraldehyde 3-phosphate</name>
        <dbReference type="ChEBI" id="CHEBI:59776"/>
    </ligand>
</feature>
<feature type="binding site" evidence="1">
    <location>
        <position position="184"/>
    </location>
    <ligand>
        <name>D-glyceraldehyde 3-phosphate</name>
        <dbReference type="ChEBI" id="CHEBI:59776"/>
    </ligand>
</feature>
<feature type="binding site" evidence="1">
    <location>
        <begin position="213"/>
        <end position="214"/>
    </location>
    <ligand>
        <name>D-glyceraldehyde 3-phosphate</name>
        <dbReference type="ChEBI" id="CHEBI:59776"/>
    </ligand>
</feature>
<feature type="binding site" evidence="1">
    <location>
        <position position="236"/>
    </location>
    <ligand>
        <name>D-glyceraldehyde 3-phosphate</name>
        <dbReference type="ChEBI" id="CHEBI:59776"/>
    </ligand>
</feature>
<feature type="binding site" evidence="1">
    <location>
        <position position="318"/>
    </location>
    <ligand>
        <name>NAD(+)</name>
        <dbReference type="ChEBI" id="CHEBI:57540"/>
    </ligand>
</feature>
<feature type="site" description="Activates thiol group during catalysis" evidence="1">
    <location>
        <position position="181"/>
    </location>
</feature>
<protein>
    <recommendedName>
        <fullName>Glyceraldehyde-3-phosphate dehydrogenase, cytosolic</fullName>
        <ecNumber>1.2.1.12</ecNumber>
    </recommendedName>
</protein>
<proteinExistence type="inferred from homology"/>
<name>G3PC_CHLRE</name>
<comment type="function">
    <text evidence="1">Key enzyme in glycolysis that catalyzes the first step of the pathway by converting D-glyceraldehyde 3-phosphate (G3P) into 3-phospho-D-glyceroyl phosphate. Essential for the maintenance of cellular ATP levels and carbohydrate metabolism (By similarity).</text>
</comment>
<comment type="catalytic activity">
    <reaction evidence="2">
        <text>D-glyceraldehyde 3-phosphate + phosphate + NAD(+) = (2R)-3-phospho-glyceroyl phosphate + NADH + H(+)</text>
        <dbReference type="Rhea" id="RHEA:10300"/>
        <dbReference type="ChEBI" id="CHEBI:15378"/>
        <dbReference type="ChEBI" id="CHEBI:43474"/>
        <dbReference type="ChEBI" id="CHEBI:57540"/>
        <dbReference type="ChEBI" id="CHEBI:57604"/>
        <dbReference type="ChEBI" id="CHEBI:57945"/>
        <dbReference type="ChEBI" id="CHEBI:59776"/>
        <dbReference type="EC" id="1.2.1.12"/>
    </reaction>
</comment>
<comment type="pathway">
    <text>Carbohydrate degradation; glycolysis; pyruvate from D-glyceraldehyde 3-phosphate: step 1/5.</text>
</comment>
<comment type="subunit">
    <text evidence="1">Homotetramer.</text>
</comment>
<comment type="subcellular location">
    <subcellularLocation>
        <location evidence="1">Cytoplasm</location>
    </subcellularLocation>
</comment>
<comment type="miscellaneous">
    <text>Algae contain three forms of GAPDH: two cytosolic forms which participate in glycolysis and one chloroplastic form which participates in photosynthesis. These three forms are encoded by distinct genes.</text>
</comment>
<comment type="similarity">
    <text evidence="3">Belongs to the glyceraldehyde-3-phosphate dehydrogenase family.</text>
</comment>
<keyword id="KW-0963">Cytoplasm</keyword>
<keyword id="KW-0324">Glycolysis</keyword>
<keyword id="KW-0520">NAD</keyword>
<keyword id="KW-0560">Oxidoreductase</keyword>